<proteinExistence type="inferred from homology"/>
<gene>
    <name evidence="1" type="primary">rpsO</name>
    <name type="ordered locus">RoseRS_0948</name>
</gene>
<evidence type="ECO:0000255" key="1">
    <source>
        <dbReference type="HAMAP-Rule" id="MF_01343"/>
    </source>
</evidence>
<evidence type="ECO:0000305" key="2"/>
<sequence>MALEKDEKTAIIADYQMHSTDTGSPQVQVALLTERINGLIEHLKVHPHDHHSRRGLLKLVGRRRRLLAYLASRDKEAYRKLIDTLGLRR</sequence>
<accession>A5URV4</accession>
<name>RS15_ROSS1</name>
<feature type="chain" id="PRO_1000054862" description="Small ribosomal subunit protein uS15">
    <location>
        <begin position="1"/>
        <end position="89"/>
    </location>
</feature>
<reference key="1">
    <citation type="submission" date="2007-04" db="EMBL/GenBank/DDBJ databases">
        <title>Complete sequence of Roseiflexus sp. RS-1.</title>
        <authorList>
            <consortium name="US DOE Joint Genome Institute"/>
            <person name="Copeland A."/>
            <person name="Lucas S."/>
            <person name="Lapidus A."/>
            <person name="Barry K."/>
            <person name="Detter J.C."/>
            <person name="Glavina del Rio T."/>
            <person name="Hammon N."/>
            <person name="Israni S."/>
            <person name="Dalin E."/>
            <person name="Tice H."/>
            <person name="Pitluck S."/>
            <person name="Chertkov O."/>
            <person name="Brettin T."/>
            <person name="Bruce D."/>
            <person name="Han C."/>
            <person name="Schmutz J."/>
            <person name="Larimer F."/>
            <person name="Land M."/>
            <person name="Hauser L."/>
            <person name="Kyrpides N."/>
            <person name="Mikhailova N."/>
            <person name="Bryant D.A."/>
            <person name="Richardson P."/>
        </authorList>
    </citation>
    <scope>NUCLEOTIDE SEQUENCE [LARGE SCALE GENOMIC DNA]</scope>
    <source>
        <strain>RS-1</strain>
    </source>
</reference>
<keyword id="KW-0687">Ribonucleoprotein</keyword>
<keyword id="KW-0689">Ribosomal protein</keyword>
<keyword id="KW-0694">RNA-binding</keyword>
<keyword id="KW-0699">rRNA-binding</keyword>
<protein>
    <recommendedName>
        <fullName evidence="1">Small ribosomal subunit protein uS15</fullName>
    </recommendedName>
    <alternativeName>
        <fullName evidence="2">30S ribosomal protein S15</fullName>
    </alternativeName>
</protein>
<organism>
    <name type="scientific">Roseiflexus sp. (strain RS-1)</name>
    <dbReference type="NCBI Taxonomy" id="357808"/>
    <lineage>
        <taxon>Bacteria</taxon>
        <taxon>Bacillati</taxon>
        <taxon>Chloroflexota</taxon>
        <taxon>Chloroflexia</taxon>
        <taxon>Chloroflexales</taxon>
        <taxon>Roseiflexineae</taxon>
        <taxon>Roseiflexaceae</taxon>
        <taxon>Roseiflexus</taxon>
    </lineage>
</organism>
<comment type="function">
    <text evidence="1">One of the primary rRNA binding proteins, it binds directly to 16S rRNA where it helps nucleate assembly of the platform of the 30S subunit by binding and bridging several RNA helices of the 16S rRNA.</text>
</comment>
<comment type="function">
    <text evidence="1">Forms an intersubunit bridge (bridge B4) with the 23S rRNA of the 50S subunit in the ribosome.</text>
</comment>
<comment type="subunit">
    <text evidence="1">Part of the 30S ribosomal subunit. Forms a bridge to the 50S subunit in the 70S ribosome, contacting the 23S rRNA.</text>
</comment>
<comment type="similarity">
    <text evidence="1">Belongs to the universal ribosomal protein uS15 family.</text>
</comment>
<dbReference type="EMBL" id="CP000686">
    <property type="protein sequence ID" value="ABQ89357.1"/>
    <property type="molecule type" value="Genomic_DNA"/>
</dbReference>
<dbReference type="RefSeq" id="WP_011955710.1">
    <property type="nucleotide sequence ID" value="NC_009523.1"/>
</dbReference>
<dbReference type="SMR" id="A5URV4"/>
<dbReference type="STRING" id="357808.RoseRS_0948"/>
<dbReference type="KEGG" id="rrs:RoseRS_0948"/>
<dbReference type="eggNOG" id="COG0184">
    <property type="taxonomic scope" value="Bacteria"/>
</dbReference>
<dbReference type="HOGENOM" id="CLU_148518_0_0_0"/>
<dbReference type="OrthoDB" id="9799262at2"/>
<dbReference type="Proteomes" id="UP000006554">
    <property type="component" value="Chromosome"/>
</dbReference>
<dbReference type="GO" id="GO:0022627">
    <property type="term" value="C:cytosolic small ribosomal subunit"/>
    <property type="evidence" value="ECO:0007669"/>
    <property type="project" value="TreeGrafter"/>
</dbReference>
<dbReference type="GO" id="GO:0019843">
    <property type="term" value="F:rRNA binding"/>
    <property type="evidence" value="ECO:0007669"/>
    <property type="project" value="UniProtKB-UniRule"/>
</dbReference>
<dbReference type="GO" id="GO:0003735">
    <property type="term" value="F:structural constituent of ribosome"/>
    <property type="evidence" value="ECO:0007669"/>
    <property type="project" value="InterPro"/>
</dbReference>
<dbReference type="GO" id="GO:0006412">
    <property type="term" value="P:translation"/>
    <property type="evidence" value="ECO:0007669"/>
    <property type="project" value="UniProtKB-UniRule"/>
</dbReference>
<dbReference type="CDD" id="cd00353">
    <property type="entry name" value="Ribosomal_S15p_S13e"/>
    <property type="match status" value="1"/>
</dbReference>
<dbReference type="FunFam" id="1.10.287.10:FF:000002">
    <property type="entry name" value="30S ribosomal protein S15"/>
    <property type="match status" value="1"/>
</dbReference>
<dbReference type="Gene3D" id="6.10.250.3130">
    <property type="match status" value="1"/>
</dbReference>
<dbReference type="Gene3D" id="1.10.287.10">
    <property type="entry name" value="S15/NS1, RNA-binding"/>
    <property type="match status" value="1"/>
</dbReference>
<dbReference type="HAMAP" id="MF_01343_B">
    <property type="entry name" value="Ribosomal_uS15_B"/>
    <property type="match status" value="1"/>
</dbReference>
<dbReference type="InterPro" id="IPR000589">
    <property type="entry name" value="Ribosomal_uS15"/>
</dbReference>
<dbReference type="InterPro" id="IPR005290">
    <property type="entry name" value="Ribosomal_uS15_bac-type"/>
</dbReference>
<dbReference type="InterPro" id="IPR009068">
    <property type="entry name" value="uS15_NS1_RNA-bd_sf"/>
</dbReference>
<dbReference type="NCBIfam" id="TIGR00952">
    <property type="entry name" value="S15_bact"/>
    <property type="match status" value="1"/>
</dbReference>
<dbReference type="PANTHER" id="PTHR23321">
    <property type="entry name" value="RIBOSOMAL PROTEIN S15, BACTERIAL AND ORGANELLAR"/>
    <property type="match status" value="1"/>
</dbReference>
<dbReference type="PANTHER" id="PTHR23321:SF26">
    <property type="entry name" value="SMALL RIBOSOMAL SUBUNIT PROTEIN US15M"/>
    <property type="match status" value="1"/>
</dbReference>
<dbReference type="Pfam" id="PF00312">
    <property type="entry name" value="Ribosomal_S15"/>
    <property type="match status" value="1"/>
</dbReference>
<dbReference type="SMART" id="SM01387">
    <property type="entry name" value="Ribosomal_S15"/>
    <property type="match status" value="1"/>
</dbReference>
<dbReference type="SUPFAM" id="SSF47060">
    <property type="entry name" value="S15/NS1 RNA-binding domain"/>
    <property type="match status" value="1"/>
</dbReference>
<dbReference type="PROSITE" id="PS00362">
    <property type="entry name" value="RIBOSOMAL_S15"/>
    <property type="match status" value="1"/>
</dbReference>